<organism>
    <name type="scientific">Candida albicans (strain SC5314 / ATCC MYA-2876)</name>
    <name type="common">Yeast</name>
    <dbReference type="NCBI Taxonomy" id="237561"/>
    <lineage>
        <taxon>Eukaryota</taxon>
        <taxon>Fungi</taxon>
        <taxon>Dikarya</taxon>
        <taxon>Ascomycota</taxon>
        <taxon>Saccharomycotina</taxon>
        <taxon>Pichiomycetes</taxon>
        <taxon>Debaryomycetaceae</taxon>
        <taxon>Candida/Lodderomyces clade</taxon>
        <taxon>Candida</taxon>
    </lineage>
</organism>
<reference key="1">
    <citation type="journal article" date="2004" name="Proc. Natl. Acad. Sci. U.S.A.">
        <title>The diploid genome sequence of Candida albicans.</title>
        <authorList>
            <person name="Jones T."/>
            <person name="Federspiel N.A."/>
            <person name="Chibana H."/>
            <person name="Dungan J."/>
            <person name="Kalman S."/>
            <person name="Magee B.B."/>
            <person name="Newport G."/>
            <person name="Thorstenson Y.R."/>
            <person name="Agabian N."/>
            <person name="Magee P.T."/>
            <person name="Davis R.W."/>
            <person name="Scherer S."/>
        </authorList>
    </citation>
    <scope>NUCLEOTIDE SEQUENCE [LARGE SCALE GENOMIC DNA]</scope>
    <source>
        <strain>SC5314 / ATCC MYA-2876</strain>
    </source>
</reference>
<reference key="2">
    <citation type="journal article" date="2007" name="Genome Biol.">
        <title>Assembly of the Candida albicans genome into sixteen supercontigs aligned on the eight chromosomes.</title>
        <authorList>
            <person name="van het Hoog M."/>
            <person name="Rast T.J."/>
            <person name="Martchenko M."/>
            <person name="Grindle S."/>
            <person name="Dignard D."/>
            <person name="Hogues H."/>
            <person name="Cuomo C."/>
            <person name="Berriman M."/>
            <person name="Scherer S."/>
            <person name="Magee B.B."/>
            <person name="Whiteway M."/>
            <person name="Chibana H."/>
            <person name="Nantel A."/>
            <person name="Magee P.T."/>
        </authorList>
    </citation>
    <scope>GENOME REANNOTATION</scope>
    <source>
        <strain>SC5314 / ATCC MYA-2876</strain>
    </source>
</reference>
<reference key="3">
    <citation type="journal article" date="2013" name="Genome Biol.">
        <title>Assembly of a phased diploid Candida albicans genome facilitates allele-specific measurements and provides a simple model for repeat and indel structure.</title>
        <authorList>
            <person name="Muzzey D."/>
            <person name="Schwartz K."/>
            <person name="Weissman J.S."/>
            <person name="Sherlock G."/>
        </authorList>
    </citation>
    <scope>NUCLEOTIDE SEQUENCE [LARGE SCALE GENOMIC DNA]</scope>
    <scope>GENOME REANNOTATION</scope>
    <source>
        <strain>SC5314 / ATCC MYA-2876</strain>
    </source>
</reference>
<reference key="4">
    <citation type="journal article" date="2003" name="Yeast">
        <title>Genome-wide identification of fungal GPI proteins.</title>
        <authorList>
            <person name="De Groot P.W."/>
            <person name="Hellingwerf K.J."/>
            <person name="Klis F.M."/>
        </authorList>
    </citation>
    <scope>PREDICTION OF GPI-ANCHOR</scope>
</reference>
<reference key="5">
    <citation type="journal article" date="2006" name="Mol. Microbiol.">
        <title>The role of nutrient regulation and the Gpa2 protein in the mating pheromone response of C. albicans.</title>
        <authorList>
            <person name="Bennett R.J."/>
            <person name="Johnson A.D."/>
        </authorList>
    </citation>
    <scope>INDUCTION</scope>
</reference>
<reference key="6">
    <citation type="journal article" date="2007" name="Mol. Cell. Proteomics">
        <title>Integrated proteomics and genomics strategies bring new insight into Candida albicans response upon macrophage interaction.</title>
        <authorList>
            <person name="Fernandez-Arenas E."/>
            <person name="Cabezon V."/>
            <person name="Bermejo C."/>
            <person name="Arroyo J."/>
            <person name="Nombela C."/>
            <person name="Diez-Orejas R."/>
            <person name="Gil C."/>
        </authorList>
    </citation>
    <scope>INDUCTION</scope>
</reference>
<reference key="7">
    <citation type="journal article" date="2008" name="BMC Microbiol.">
        <title>Processing of predicted substrates of fungal Kex2 proteinases from Candida albicans, C. glabrata, Saccharomyces cerevisiae and Pichia pastoris.</title>
        <authorList>
            <person name="Bader O."/>
            <person name="Krauke Y."/>
            <person name="Hube B."/>
        </authorList>
    </citation>
    <scope>CLEAVAGE BY KEX2</scope>
</reference>
<reference key="8">
    <citation type="journal article" date="2012" name="Eukaryot. Cell">
        <title>Divergent targets of Candida albicans biofilm regulator Bcr1 in vitro and in vivo.</title>
        <authorList>
            <person name="Fanning S."/>
            <person name="Xu W."/>
            <person name="Solis N."/>
            <person name="Woolford C.A."/>
            <person name="Filler S.G."/>
            <person name="Mitchell A.P."/>
        </authorList>
    </citation>
    <scope>INDUCTION</scope>
</reference>
<reference key="9">
    <citation type="journal article" date="2013" name="Antimicrob. Agents Chemother.">
        <title>Milbemycins: more than efflux inhibitors for fungal pathogens.</title>
        <authorList>
            <person name="Silva L.V."/>
            <person name="Sanguinetti M."/>
            <person name="Vandeputte P."/>
            <person name="Torelli R."/>
            <person name="Rochat B."/>
            <person name="Sanglard D."/>
        </authorList>
    </citation>
    <scope>INDUCTION</scope>
</reference>
<proteinExistence type="evidence at protein level"/>
<sequence>MKFSTVFTAIFALGTAVSAQQVVTPASDPLALELSQRNLDKLYELQERDLFSIVEGLFSSINYTSILDSIDYESIAGWTNNLLVENNNIEYLDNILNFLGDTDLVPFAVSYLLSNNETRNIVGEVVIEALPLIKDIDPTPIFVALKNSGLAYVLVADLIKNPNTVPFVKQVVVDLLDEGSFGLGDLFGGSSEATTTAVAIDSLATINTNIDLTVAAAPTTKAQSIGSIDTASLAVLFSEARTANGNGATKVANTVAVTAQVTAQVTNVGTTAKATKAVATGEINYSGITGPAYESLPPTQFGSVPTSINYSALSQISGALRKREYNDAVEAALRDIQKREEGIDDVEIALRKMKRDNIEDLLTTIFASVARSNLLNTTIQYLVTDQRFESTVVELLQGVFENIGSTLTGILDTDWSALQPLVSSLLNSGLLTDFISRAFNDDELKAVLWNDITSIFKRDMAFRDEIVKRSNGTITSLPVSDFITGVATETSALDGADGTLSSLDVTAFINTVSHSFITSNASSSAVITIQSDNAGSSYGPGFYSTIFAVFGLFAMMI</sequence>
<evidence type="ECO:0000255" key="1"/>
<evidence type="ECO:0000269" key="2">
    <source>
    </source>
</evidence>
<evidence type="ECO:0000269" key="3">
    <source>
    </source>
</evidence>
<evidence type="ECO:0000269" key="4">
    <source>
    </source>
</evidence>
<evidence type="ECO:0000269" key="5">
    <source>
    </source>
</evidence>
<evidence type="ECO:0000269" key="6">
    <source>
    </source>
</evidence>
<evidence type="ECO:0000305" key="7"/>
<keyword id="KW-1003">Cell membrane</keyword>
<keyword id="KW-0175">Coiled coil</keyword>
<keyword id="KW-0325">Glycoprotein</keyword>
<keyword id="KW-0336">GPI-anchor</keyword>
<keyword id="KW-0449">Lipoprotein</keyword>
<keyword id="KW-0472">Membrane</keyword>
<keyword id="KW-1185">Reference proteome</keyword>
<keyword id="KW-0732">Signal</keyword>
<keyword id="KW-0843">Virulence</keyword>
<dbReference type="EMBL" id="CP017624">
    <property type="protein sequence ID" value="AOW27371.1"/>
    <property type="molecule type" value="Genomic_DNA"/>
</dbReference>
<dbReference type="RefSeq" id="XP_721014.2">
    <property type="nucleotide sequence ID" value="XM_715921.2"/>
</dbReference>
<dbReference type="STRING" id="237561.Q5AHA4"/>
<dbReference type="GlyCosmos" id="Q5AHA4">
    <property type="glycosylation" value="7 sites, No reported glycans"/>
</dbReference>
<dbReference type="EnsemblFungi" id="C2_03350W_A-T">
    <property type="protein sequence ID" value="C2_03350W_A-T-p1"/>
    <property type="gene ID" value="C2_03350W_A"/>
</dbReference>
<dbReference type="GeneID" id="3637391"/>
<dbReference type="KEGG" id="cal:CAALFM_C203350WA"/>
<dbReference type="CGD" id="CAL0000193395">
    <property type="gene designation" value="PGA17"/>
</dbReference>
<dbReference type="VEuPathDB" id="FungiDB:C2_03350W_A"/>
<dbReference type="eggNOG" id="ENOG502RQ5Y">
    <property type="taxonomic scope" value="Eukaryota"/>
</dbReference>
<dbReference type="HOGENOM" id="CLU_438699_0_0_1"/>
<dbReference type="InParanoid" id="Q5AHA4"/>
<dbReference type="OrthoDB" id="4025103at2759"/>
<dbReference type="PRO" id="PR:Q5AHA4"/>
<dbReference type="Proteomes" id="UP000000559">
    <property type="component" value="Chromosome 2"/>
</dbReference>
<dbReference type="GO" id="GO:0005886">
    <property type="term" value="C:plasma membrane"/>
    <property type="evidence" value="ECO:0007669"/>
    <property type="project" value="UniProtKB-SubCell"/>
</dbReference>
<dbReference type="GO" id="GO:0098552">
    <property type="term" value="C:side of membrane"/>
    <property type="evidence" value="ECO:0007669"/>
    <property type="project" value="UniProtKB-KW"/>
</dbReference>
<protein>
    <recommendedName>
        <fullName>Predicted GPI-anchored protein 17</fullName>
    </recommendedName>
</protein>
<gene>
    <name type="primary">PGA17</name>
    <name type="ordered locus">CAALFM_C203350WA</name>
    <name type="ORF">CaO19.8512</name>
    <name type="ORF">CaO19.893</name>
</gene>
<comment type="function">
    <text>Predicted GPI-anchored protein which may have a role during host infection.</text>
</comment>
<comment type="subcellular location">
    <subcellularLocation>
        <location evidence="7">Cell membrane</location>
        <topology evidence="7">Lipid-anchor</topology>
        <topology evidence="7">GPI-anchor</topology>
    </subcellularLocation>
</comment>
<comment type="induction">
    <text evidence="2 3 5 6">Up-regulated upon milbemycins A3 oxim derivative (A3Ox) treatment, upon interaction of cells with host macrophages, and during oralpharyngeal candidiasis. Repressed by alpha pheromone.</text>
</comment>
<comment type="PTM">
    <text evidence="4">Substrate for cleavage by KEX2 in vitro.</text>
</comment>
<name>PGA17_CANAL</name>
<accession>Q5AHA4</accession>
<accession>A0A1D8PGU3</accession>
<feature type="signal peptide" evidence="1">
    <location>
        <begin position="1"/>
        <end position="19"/>
    </location>
</feature>
<feature type="chain" id="PRO_0000424921" description="Predicted GPI-anchored protein 17">
    <location>
        <begin position="20"/>
        <end position="533"/>
    </location>
</feature>
<feature type="propeptide" id="PRO_0000424922" description="Removed in mature form" evidence="1">
    <location>
        <begin position="534"/>
        <end position="557"/>
    </location>
</feature>
<feature type="coiled-coil region" evidence="1">
    <location>
        <begin position="320"/>
        <end position="355"/>
    </location>
</feature>
<feature type="lipid moiety-binding region" description="GPI-anchor amidated asparagine" evidence="1">
    <location>
        <position position="533"/>
    </location>
</feature>
<feature type="glycosylation site" description="N-linked (GlcNAc...) asparagine" evidence="1">
    <location>
        <position position="62"/>
    </location>
</feature>
<feature type="glycosylation site" description="N-linked (GlcNAc...) asparagine" evidence="1">
    <location>
        <position position="116"/>
    </location>
</feature>
<feature type="glycosylation site" description="N-linked (GlcNAc...) asparagine" evidence="1">
    <location>
        <position position="284"/>
    </location>
</feature>
<feature type="glycosylation site" description="N-linked (GlcNAc...) asparagine" evidence="1">
    <location>
        <position position="309"/>
    </location>
</feature>
<feature type="glycosylation site" description="N-linked (GlcNAc...) asparagine" evidence="1">
    <location>
        <position position="376"/>
    </location>
</feature>
<feature type="glycosylation site" description="N-linked (GlcNAc...) asparagine" evidence="1">
    <location>
        <position position="471"/>
    </location>
</feature>
<feature type="glycosylation site" description="N-linked (GlcNAc...) asparagine" evidence="1">
    <location>
        <position position="520"/>
    </location>
</feature>